<dbReference type="EMBL" id="CP000036">
    <property type="protein sequence ID" value="ABB68682.1"/>
    <property type="molecule type" value="Genomic_DNA"/>
</dbReference>
<dbReference type="RefSeq" id="WP_000776505.1">
    <property type="nucleotide sequence ID" value="NC_007613.1"/>
</dbReference>
<dbReference type="SMR" id="Q31TC6"/>
<dbReference type="GeneID" id="75059164"/>
<dbReference type="KEGG" id="sbo:SBO_4260"/>
<dbReference type="HOGENOM" id="CLU_072531_2_0_6"/>
<dbReference type="Proteomes" id="UP000007067">
    <property type="component" value="Chromosome"/>
</dbReference>
<dbReference type="GO" id="GO:0005737">
    <property type="term" value="C:cytoplasm"/>
    <property type="evidence" value="ECO:0007669"/>
    <property type="project" value="UniProtKB-SubCell"/>
</dbReference>
<dbReference type="GO" id="GO:0016301">
    <property type="term" value="F:kinase activity"/>
    <property type="evidence" value="ECO:0007669"/>
    <property type="project" value="UniProtKB-KW"/>
</dbReference>
<dbReference type="GO" id="GO:0009401">
    <property type="term" value="P:phosphoenolpyruvate-dependent sugar phosphotransferase system"/>
    <property type="evidence" value="ECO:0007669"/>
    <property type="project" value="UniProtKB-KW"/>
</dbReference>
<dbReference type="CDD" id="cd00211">
    <property type="entry name" value="PTS_IIA_fru"/>
    <property type="match status" value="1"/>
</dbReference>
<dbReference type="FunFam" id="3.40.930.10:FF:000005">
    <property type="entry name" value="Ascorbate-specific phosphotransferase enzyme IIA component"/>
    <property type="match status" value="1"/>
</dbReference>
<dbReference type="Gene3D" id="3.40.930.10">
    <property type="entry name" value="Mannitol-specific EII, Chain A"/>
    <property type="match status" value="1"/>
</dbReference>
<dbReference type="InterPro" id="IPR051351">
    <property type="entry name" value="Ascorbate-PTS_EIIA_comp"/>
</dbReference>
<dbReference type="InterPro" id="IPR016152">
    <property type="entry name" value="PTrfase/Anion_transptr"/>
</dbReference>
<dbReference type="InterPro" id="IPR002178">
    <property type="entry name" value="PTS_EIIA_type-2_dom"/>
</dbReference>
<dbReference type="NCBIfam" id="NF007694">
    <property type="entry name" value="PRK10372.1"/>
    <property type="match status" value="1"/>
</dbReference>
<dbReference type="PANTHER" id="PTHR36203">
    <property type="entry name" value="ASCORBATE-SPECIFIC PTS SYSTEM EIIA COMPONENT"/>
    <property type="match status" value="1"/>
</dbReference>
<dbReference type="PANTHER" id="PTHR36203:SF1">
    <property type="entry name" value="ASCORBATE-SPECIFIC PTS SYSTEM EIIA COMPONENT"/>
    <property type="match status" value="1"/>
</dbReference>
<dbReference type="Pfam" id="PF00359">
    <property type="entry name" value="PTS_EIIA_2"/>
    <property type="match status" value="1"/>
</dbReference>
<dbReference type="SUPFAM" id="SSF55804">
    <property type="entry name" value="Phoshotransferase/anion transport protein"/>
    <property type="match status" value="1"/>
</dbReference>
<dbReference type="PROSITE" id="PS51094">
    <property type="entry name" value="PTS_EIIA_TYPE_2"/>
    <property type="match status" value="1"/>
</dbReference>
<dbReference type="PROSITE" id="PS00372">
    <property type="entry name" value="PTS_EIIA_TYPE_2_HIS"/>
    <property type="match status" value="1"/>
</dbReference>
<keyword id="KW-0963">Cytoplasm</keyword>
<keyword id="KW-0418">Kinase</keyword>
<keyword id="KW-0597">Phosphoprotein</keyword>
<keyword id="KW-0598">Phosphotransferase system</keyword>
<keyword id="KW-0808">Transferase</keyword>
<keyword id="KW-0813">Transport</keyword>
<sequence length="154" mass="17226">MKLRDSLAENKSIRLQAEAETWQDAVKIGVDLLVAADVVEPRYYQAILDAVEQHGPYFVLAPGLAMPHGRPEEGVKKTGFALVTLKKPLEFNHEDNDPVDILITMAAVDANTHQEVGIMQIVNLFEDEENFDRLRACRTEQEVLDLIDRTNAAA</sequence>
<feature type="chain" id="PRO_0000230318" description="Ascorbate-specific PTS system EIIA component">
    <location>
        <begin position="1"/>
        <end position="154"/>
    </location>
</feature>
<feature type="domain" description="PTS EIIA type-2" evidence="2">
    <location>
        <begin position="6"/>
        <end position="150"/>
    </location>
</feature>
<feature type="active site" description="Tele-phosphohistidine intermediate" evidence="2">
    <location>
        <position position="68"/>
    </location>
</feature>
<feature type="modified residue" description="Phosphohistidine" evidence="1">
    <location>
        <position position="68"/>
    </location>
</feature>
<protein>
    <recommendedName>
        <fullName evidence="1">Ascorbate-specific PTS system EIIA component</fullName>
    </recommendedName>
    <alternativeName>
        <fullName evidence="1">Ascorbate-specific phosphotransferase enzyme IIA component</fullName>
    </alternativeName>
</protein>
<name>ULAC_SHIBS</name>
<proteinExistence type="inferred from homology"/>
<evidence type="ECO:0000250" key="1">
    <source>
        <dbReference type="UniProtKB" id="P69820"/>
    </source>
</evidence>
<evidence type="ECO:0000255" key="2">
    <source>
        <dbReference type="PROSITE-ProRule" id="PRU00417"/>
    </source>
</evidence>
<evidence type="ECO:0000305" key="3"/>
<reference key="1">
    <citation type="journal article" date="2005" name="Nucleic Acids Res.">
        <title>Genome dynamics and diversity of Shigella species, the etiologic agents of bacillary dysentery.</title>
        <authorList>
            <person name="Yang F."/>
            <person name="Yang J."/>
            <person name="Zhang X."/>
            <person name="Chen L."/>
            <person name="Jiang Y."/>
            <person name="Yan Y."/>
            <person name="Tang X."/>
            <person name="Wang J."/>
            <person name="Xiong Z."/>
            <person name="Dong J."/>
            <person name="Xue Y."/>
            <person name="Zhu Y."/>
            <person name="Xu X."/>
            <person name="Sun L."/>
            <person name="Chen S."/>
            <person name="Nie H."/>
            <person name="Peng J."/>
            <person name="Xu J."/>
            <person name="Wang Y."/>
            <person name="Yuan Z."/>
            <person name="Wen Y."/>
            <person name="Yao Z."/>
            <person name="Shen Y."/>
            <person name="Qiang B."/>
            <person name="Hou Y."/>
            <person name="Yu J."/>
            <person name="Jin Q."/>
        </authorList>
    </citation>
    <scope>NUCLEOTIDE SEQUENCE [LARGE SCALE GENOMIC DNA]</scope>
    <source>
        <strain>Sb227</strain>
    </source>
</reference>
<organism>
    <name type="scientific">Shigella boydii serotype 4 (strain Sb227)</name>
    <dbReference type="NCBI Taxonomy" id="300268"/>
    <lineage>
        <taxon>Bacteria</taxon>
        <taxon>Pseudomonadati</taxon>
        <taxon>Pseudomonadota</taxon>
        <taxon>Gammaproteobacteria</taxon>
        <taxon>Enterobacterales</taxon>
        <taxon>Enterobacteriaceae</taxon>
        <taxon>Shigella</taxon>
    </lineage>
</organism>
<gene>
    <name type="primary">ulaC</name>
    <name type="ordered locus">SBO_4260</name>
</gene>
<accession>Q31TC6</accession>
<comment type="function">
    <text evidence="1">The phosphoenolpyruvate-dependent sugar phosphotransferase system (sugar PTS), a major carbohydrate active transport system, catalyzes the phosphorylation of incoming sugar substrates concomitantly with their translocation across the cell membrane. The enzyme II UlaABC PTS system is involved in ascorbate transport.</text>
</comment>
<comment type="subcellular location">
    <subcellularLocation>
        <location evidence="3">Cytoplasm</location>
    </subcellularLocation>
</comment>
<comment type="induction">
    <text evidence="1">Induced by L-ascorbate. Repressed by UlaR.</text>
</comment>
<comment type="domain">
    <text evidence="2">The PTS EIIA type-2 domain is phosphorylated by phospho-HPr on a histidyl residue. Then, it transfers the phosphoryl group to the PTS EIIB type-2 domain.</text>
</comment>